<reference key="1">
    <citation type="journal article" date="2009" name="J. Bacteriol.">
        <title>The genome of Burkholderia cenocepacia J2315, an epidemic pathogen of cystic fibrosis patients.</title>
        <authorList>
            <person name="Holden M.T."/>
            <person name="Seth-Smith H.M."/>
            <person name="Crossman L.C."/>
            <person name="Sebaihia M."/>
            <person name="Bentley S.D."/>
            <person name="Cerdeno-Tarraga A.M."/>
            <person name="Thomson N.R."/>
            <person name="Bason N."/>
            <person name="Quail M.A."/>
            <person name="Sharp S."/>
            <person name="Cherevach I."/>
            <person name="Churcher C."/>
            <person name="Goodhead I."/>
            <person name="Hauser H."/>
            <person name="Holroyd N."/>
            <person name="Mungall K."/>
            <person name="Scott P."/>
            <person name="Walker D."/>
            <person name="White B."/>
            <person name="Rose H."/>
            <person name="Iversen P."/>
            <person name="Mil-Homens D."/>
            <person name="Rocha E.P."/>
            <person name="Fialho A.M."/>
            <person name="Baldwin A."/>
            <person name="Dowson C."/>
            <person name="Barrell B.G."/>
            <person name="Govan J.R."/>
            <person name="Vandamme P."/>
            <person name="Hart C.A."/>
            <person name="Mahenthiralingam E."/>
            <person name="Parkhill J."/>
        </authorList>
    </citation>
    <scope>NUCLEOTIDE SEQUENCE [LARGE SCALE GENOMIC DNA]</scope>
    <source>
        <strain>ATCC BAA-245 / DSM 16553 / LMG 16656 / NCTC 13227 / J2315 / CF5610</strain>
    </source>
</reference>
<dbReference type="EC" id="6.3.3.1" evidence="1"/>
<dbReference type="EMBL" id="AM747720">
    <property type="protein sequence ID" value="CAR53585.1"/>
    <property type="molecule type" value="Genomic_DNA"/>
</dbReference>
<dbReference type="RefSeq" id="WP_006484927.1">
    <property type="nucleotide sequence ID" value="NC_011000.1"/>
</dbReference>
<dbReference type="SMR" id="B4EDH7"/>
<dbReference type="GeneID" id="93193005"/>
<dbReference type="KEGG" id="bcj:BCAL3261"/>
<dbReference type="eggNOG" id="COG0150">
    <property type="taxonomic scope" value="Bacteria"/>
</dbReference>
<dbReference type="HOGENOM" id="CLU_047116_0_0_4"/>
<dbReference type="BioCyc" id="BCEN216591:G1G1V-3632-MONOMER"/>
<dbReference type="UniPathway" id="UPA00074">
    <property type="reaction ID" value="UER00129"/>
</dbReference>
<dbReference type="Proteomes" id="UP000001035">
    <property type="component" value="Chromosome 1"/>
</dbReference>
<dbReference type="GO" id="GO:0005829">
    <property type="term" value="C:cytosol"/>
    <property type="evidence" value="ECO:0007669"/>
    <property type="project" value="TreeGrafter"/>
</dbReference>
<dbReference type="GO" id="GO:0005524">
    <property type="term" value="F:ATP binding"/>
    <property type="evidence" value="ECO:0007669"/>
    <property type="project" value="UniProtKB-KW"/>
</dbReference>
<dbReference type="GO" id="GO:0004637">
    <property type="term" value="F:phosphoribosylamine-glycine ligase activity"/>
    <property type="evidence" value="ECO:0007669"/>
    <property type="project" value="TreeGrafter"/>
</dbReference>
<dbReference type="GO" id="GO:0004641">
    <property type="term" value="F:phosphoribosylformylglycinamidine cyclo-ligase activity"/>
    <property type="evidence" value="ECO:0007669"/>
    <property type="project" value="UniProtKB-UniRule"/>
</dbReference>
<dbReference type="GO" id="GO:0006189">
    <property type="term" value="P:'de novo' IMP biosynthetic process"/>
    <property type="evidence" value="ECO:0007669"/>
    <property type="project" value="UniProtKB-UniRule"/>
</dbReference>
<dbReference type="GO" id="GO:0046084">
    <property type="term" value="P:adenine biosynthetic process"/>
    <property type="evidence" value="ECO:0007669"/>
    <property type="project" value="TreeGrafter"/>
</dbReference>
<dbReference type="CDD" id="cd02196">
    <property type="entry name" value="PurM"/>
    <property type="match status" value="1"/>
</dbReference>
<dbReference type="FunFam" id="3.30.1330.10:FF:000001">
    <property type="entry name" value="Phosphoribosylformylglycinamidine cyclo-ligase"/>
    <property type="match status" value="1"/>
</dbReference>
<dbReference type="FunFam" id="3.90.650.10:FF:000001">
    <property type="entry name" value="Phosphoribosylformylglycinamidine cyclo-ligase"/>
    <property type="match status" value="1"/>
</dbReference>
<dbReference type="Gene3D" id="3.90.650.10">
    <property type="entry name" value="PurM-like C-terminal domain"/>
    <property type="match status" value="1"/>
</dbReference>
<dbReference type="Gene3D" id="3.30.1330.10">
    <property type="entry name" value="PurM-like, N-terminal domain"/>
    <property type="match status" value="1"/>
</dbReference>
<dbReference type="HAMAP" id="MF_00741">
    <property type="entry name" value="AIRS"/>
    <property type="match status" value="1"/>
</dbReference>
<dbReference type="InterPro" id="IPR010918">
    <property type="entry name" value="PurM-like_C_dom"/>
</dbReference>
<dbReference type="InterPro" id="IPR036676">
    <property type="entry name" value="PurM-like_C_sf"/>
</dbReference>
<dbReference type="InterPro" id="IPR016188">
    <property type="entry name" value="PurM-like_N"/>
</dbReference>
<dbReference type="InterPro" id="IPR036921">
    <property type="entry name" value="PurM-like_N_sf"/>
</dbReference>
<dbReference type="InterPro" id="IPR004733">
    <property type="entry name" value="PurM_cligase"/>
</dbReference>
<dbReference type="NCBIfam" id="TIGR00878">
    <property type="entry name" value="purM"/>
    <property type="match status" value="1"/>
</dbReference>
<dbReference type="PANTHER" id="PTHR10520:SF12">
    <property type="entry name" value="TRIFUNCTIONAL PURINE BIOSYNTHETIC PROTEIN ADENOSINE-3"/>
    <property type="match status" value="1"/>
</dbReference>
<dbReference type="PANTHER" id="PTHR10520">
    <property type="entry name" value="TRIFUNCTIONAL PURINE BIOSYNTHETIC PROTEIN ADENOSINE-3-RELATED"/>
    <property type="match status" value="1"/>
</dbReference>
<dbReference type="Pfam" id="PF00586">
    <property type="entry name" value="AIRS"/>
    <property type="match status" value="1"/>
</dbReference>
<dbReference type="Pfam" id="PF02769">
    <property type="entry name" value="AIRS_C"/>
    <property type="match status" value="1"/>
</dbReference>
<dbReference type="SUPFAM" id="SSF56042">
    <property type="entry name" value="PurM C-terminal domain-like"/>
    <property type="match status" value="1"/>
</dbReference>
<dbReference type="SUPFAM" id="SSF55326">
    <property type="entry name" value="PurM N-terminal domain-like"/>
    <property type="match status" value="1"/>
</dbReference>
<proteinExistence type="inferred from homology"/>
<name>PUR5_BURCJ</name>
<feature type="chain" id="PRO_1000193003" description="Phosphoribosylformylglycinamidine cyclo-ligase">
    <location>
        <begin position="1"/>
        <end position="351"/>
    </location>
</feature>
<evidence type="ECO:0000255" key="1">
    <source>
        <dbReference type="HAMAP-Rule" id="MF_00741"/>
    </source>
</evidence>
<keyword id="KW-0067">ATP-binding</keyword>
<keyword id="KW-0963">Cytoplasm</keyword>
<keyword id="KW-0436">Ligase</keyword>
<keyword id="KW-0547">Nucleotide-binding</keyword>
<keyword id="KW-0658">Purine biosynthesis</keyword>
<organism>
    <name type="scientific">Burkholderia cenocepacia (strain ATCC BAA-245 / DSM 16553 / LMG 16656 / NCTC 13227 / J2315 / CF5610)</name>
    <name type="common">Burkholderia cepacia (strain J2315)</name>
    <dbReference type="NCBI Taxonomy" id="216591"/>
    <lineage>
        <taxon>Bacteria</taxon>
        <taxon>Pseudomonadati</taxon>
        <taxon>Pseudomonadota</taxon>
        <taxon>Betaproteobacteria</taxon>
        <taxon>Burkholderiales</taxon>
        <taxon>Burkholderiaceae</taxon>
        <taxon>Burkholderia</taxon>
        <taxon>Burkholderia cepacia complex</taxon>
    </lineage>
</organism>
<comment type="catalytic activity">
    <reaction evidence="1">
        <text>2-formamido-N(1)-(5-O-phospho-beta-D-ribosyl)acetamidine + ATP = 5-amino-1-(5-phospho-beta-D-ribosyl)imidazole + ADP + phosphate + H(+)</text>
        <dbReference type="Rhea" id="RHEA:23032"/>
        <dbReference type="ChEBI" id="CHEBI:15378"/>
        <dbReference type="ChEBI" id="CHEBI:30616"/>
        <dbReference type="ChEBI" id="CHEBI:43474"/>
        <dbReference type="ChEBI" id="CHEBI:137981"/>
        <dbReference type="ChEBI" id="CHEBI:147287"/>
        <dbReference type="ChEBI" id="CHEBI:456216"/>
        <dbReference type="EC" id="6.3.3.1"/>
    </reaction>
</comment>
<comment type="pathway">
    <text evidence="1">Purine metabolism; IMP biosynthesis via de novo pathway; 5-amino-1-(5-phospho-D-ribosyl)imidazole from N(2)-formyl-N(1)-(5-phospho-D-ribosyl)glycinamide: step 2/2.</text>
</comment>
<comment type="subcellular location">
    <subcellularLocation>
        <location evidence="1">Cytoplasm</location>
    </subcellularLocation>
</comment>
<comment type="similarity">
    <text evidence="1">Belongs to the AIR synthase family.</text>
</comment>
<accession>B4EDH7</accession>
<gene>
    <name evidence="1" type="primary">purM</name>
    <name type="ordered locus">BceJ2315_32010</name>
    <name type="ORF">BCAL3261</name>
</gene>
<sequence>MNPPKSAPDAQGLSYRDAGVDIDAGDALIDKIKPFAKKTLRDGVLGGIGGFGALFEVPKKYKEPVLVSGTDGVGTKLKLAFHLNKHDTVGQDLVAMSVNDILVQGAEPLFFLDYFACGKLDVDTAATVVKGIAQGCELSGCALIGGETAEMPGMYPDGEYDLAGFAVGAVEKSKIIDGSTIAEGDVVLGLASSGIHSNGFSLVRKIIERANPDLSADFHGRSLADALMAPTRIYVKPLLALMQKLSVKGMAHITGGGLVENIPRVLREGLTAELDQNAWPLPPLFKWLQEHGGVADAEMHRVFNCGIGMAVIVSAADADAAIADLTAAGEQVWKIGTVRATREGEAQTVVV</sequence>
<protein>
    <recommendedName>
        <fullName evidence="1">Phosphoribosylformylglycinamidine cyclo-ligase</fullName>
        <ecNumber evidence="1">6.3.3.1</ecNumber>
    </recommendedName>
    <alternativeName>
        <fullName evidence="1">AIR synthase</fullName>
    </alternativeName>
    <alternativeName>
        <fullName evidence="1">AIRS</fullName>
    </alternativeName>
    <alternativeName>
        <fullName evidence="1">Phosphoribosyl-aminoimidazole synthetase</fullName>
    </alternativeName>
</protein>